<keyword id="KW-0067">ATP-binding</keyword>
<keyword id="KW-0963">Cytoplasm</keyword>
<keyword id="KW-0460">Magnesium</keyword>
<keyword id="KW-0479">Metal-binding</keyword>
<keyword id="KW-0547">Nucleotide-binding</keyword>
<keyword id="KW-1185">Reference proteome</keyword>
<keyword id="KW-0819">tRNA processing</keyword>
<dbReference type="EMBL" id="AL123456">
    <property type="protein sequence ID" value="CCP46244.1"/>
    <property type="molecule type" value="Genomic_DNA"/>
</dbReference>
<dbReference type="PIR" id="C70738">
    <property type="entry name" value="C70738"/>
</dbReference>
<dbReference type="RefSeq" id="NP_217939.1">
    <property type="nucleotide sequence ID" value="NC_000962.3"/>
</dbReference>
<dbReference type="RefSeq" id="WP_003418042.1">
    <property type="nucleotide sequence ID" value="NZ_NVQJ01000027.1"/>
</dbReference>
<dbReference type="SMR" id="P9WFS7"/>
<dbReference type="FunCoup" id="P9WFS7">
    <property type="interactions" value="74"/>
</dbReference>
<dbReference type="STRING" id="83332.Rv3422c"/>
<dbReference type="PaxDb" id="83332-Rv3422c"/>
<dbReference type="DNASU" id="887557"/>
<dbReference type="GeneID" id="887557"/>
<dbReference type="KEGG" id="mtu:Rv3422c"/>
<dbReference type="KEGG" id="mtv:RVBD_3422c"/>
<dbReference type="PATRIC" id="fig|83332.111.peg.3812"/>
<dbReference type="TubercuList" id="Rv3422c"/>
<dbReference type="eggNOG" id="COG0802">
    <property type="taxonomic scope" value="Bacteria"/>
</dbReference>
<dbReference type="InParanoid" id="P9WFS7"/>
<dbReference type="OrthoDB" id="9800307at2"/>
<dbReference type="PhylomeDB" id="P9WFS7"/>
<dbReference type="Proteomes" id="UP000001584">
    <property type="component" value="Chromosome"/>
</dbReference>
<dbReference type="GO" id="GO:0005737">
    <property type="term" value="C:cytoplasm"/>
    <property type="evidence" value="ECO:0007669"/>
    <property type="project" value="UniProtKB-SubCell"/>
</dbReference>
<dbReference type="GO" id="GO:0005524">
    <property type="term" value="F:ATP binding"/>
    <property type="evidence" value="ECO:0007669"/>
    <property type="project" value="UniProtKB-KW"/>
</dbReference>
<dbReference type="GO" id="GO:0046872">
    <property type="term" value="F:metal ion binding"/>
    <property type="evidence" value="ECO:0007669"/>
    <property type="project" value="UniProtKB-KW"/>
</dbReference>
<dbReference type="GO" id="GO:0002949">
    <property type="term" value="P:tRNA threonylcarbamoyladenosine modification"/>
    <property type="evidence" value="ECO:0000318"/>
    <property type="project" value="GO_Central"/>
</dbReference>
<dbReference type="FunFam" id="3.40.50.300:FF:001732">
    <property type="entry name" value="tRNA threonylcarbamoyladenosine biosynthesis protein TsaE"/>
    <property type="match status" value="1"/>
</dbReference>
<dbReference type="Gene3D" id="3.40.50.300">
    <property type="entry name" value="P-loop containing nucleotide triphosphate hydrolases"/>
    <property type="match status" value="1"/>
</dbReference>
<dbReference type="InterPro" id="IPR027417">
    <property type="entry name" value="P-loop_NTPase"/>
</dbReference>
<dbReference type="InterPro" id="IPR003442">
    <property type="entry name" value="T6A_TsaE"/>
</dbReference>
<dbReference type="NCBIfam" id="TIGR00150">
    <property type="entry name" value="T6A_YjeE"/>
    <property type="match status" value="1"/>
</dbReference>
<dbReference type="PANTHER" id="PTHR33540">
    <property type="entry name" value="TRNA THREONYLCARBAMOYLADENOSINE BIOSYNTHESIS PROTEIN TSAE"/>
    <property type="match status" value="1"/>
</dbReference>
<dbReference type="PANTHER" id="PTHR33540:SF2">
    <property type="entry name" value="TRNA THREONYLCARBAMOYLADENOSINE BIOSYNTHESIS PROTEIN TSAE"/>
    <property type="match status" value="1"/>
</dbReference>
<dbReference type="Pfam" id="PF02367">
    <property type="entry name" value="TsaE"/>
    <property type="match status" value="1"/>
</dbReference>
<dbReference type="SUPFAM" id="SSF52540">
    <property type="entry name" value="P-loop containing nucleoside triphosphate hydrolases"/>
    <property type="match status" value="1"/>
</dbReference>
<accession>P9WFS7</accession>
<accession>L0TCQ3</accession>
<accession>P67171</accession>
<accession>Q50706</accession>
<proteinExistence type="evidence at protein level"/>
<evidence type="ECO:0000250" key="1"/>
<evidence type="ECO:0000256" key="2">
    <source>
        <dbReference type="SAM" id="MobiDB-lite"/>
    </source>
</evidence>
<evidence type="ECO:0000305" key="3"/>
<organism>
    <name type="scientific">Mycobacterium tuberculosis (strain ATCC 25618 / H37Rv)</name>
    <dbReference type="NCBI Taxonomy" id="83332"/>
    <lineage>
        <taxon>Bacteria</taxon>
        <taxon>Bacillati</taxon>
        <taxon>Actinomycetota</taxon>
        <taxon>Actinomycetes</taxon>
        <taxon>Mycobacteriales</taxon>
        <taxon>Mycobacteriaceae</taxon>
        <taxon>Mycobacterium</taxon>
        <taxon>Mycobacterium tuberculosis complex</taxon>
    </lineage>
</organism>
<reference key="1">
    <citation type="journal article" date="1998" name="Nature">
        <title>Deciphering the biology of Mycobacterium tuberculosis from the complete genome sequence.</title>
        <authorList>
            <person name="Cole S.T."/>
            <person name="Brosch R."/>
            <person name="Parkhill J."/>
            <person name="Garnier T."/>
            <person name="Churcher C.M."/>
            <person name="Harris D.E."/>
            <person name="Gordon S.V."/>
            <person name="Eiglmeier K."/>
            <person name="Gas S."/>
            <person name="Barry C.E. III"/>
            <person name="Tekaia F."/>
            <person name="Badcock K."/>
            <person name="Basham D."/>
            <person name="Brown D."/>
            <person name="Chillingworth T."/>
            <person name="Connor R."/>
            <person name="Davies R.M."/>
            <person name="Devlin K."/>
            <person name="Feltwell T."/>
            <person name="Gentles S."/>
            <person name="Hamlin N."/>
            <person name="Holroyd S."/>
            <person name="Hornsby T."/>
            <person name="Jagels K."/>
            <person name="Krogh A."/>
            <person name="McLean J."/>
            <person name="Moule S."/>
            <person name="Murphy L.D."/>
            <person name="Oliver S."/>
            <person name="Osborne J."/>
            <person name="Quail M.A."/>
            <person name="Rajandream M.A."/>
            <person name="Rogers J."/>
            <person name="Rutter S."/>
            <person name="Seeger K."/>
            <person name="Skelton S."/>
            <person name="Squares S."/>
            <person name="Squares R."/>
            <person name="Sulston J.E."/>
            <person name="Taylor K."/>
            <person name="Whitehead S."/>
            <person name="Barrell B.G."/>
        </authorList>
    </citation>
    <scope>NUCLEOTIDE SEQUENCE [LARGE SCALE GENOMIC DNA]</scope>
    <source>
        <strain>ATCC 25618 / H37Rv</strain>
    </source>
</reference>
<reference key="2">
    <citation type="journal article" date="2011" name="Mol. Cell. Proteomics">
        <title>Proteogenomic analysis of Mycobacterium tuberculosis by high resolution mass spectrometry.</title>
        <authorList>
            <person name="Kelkar D.S."/>
            <person name="Kumar D."/>
            <person name="Kumar P."/>
            <person name="Balakrishnan L."/>
            <person name="Muthusamy B."/>
            <person name="Yadav A.K."/>
            <person name="Shrivastava P."/>
            <person name="Marimuthu A."/>
            <person name="Anand S."/>
            <person name="Sundaram H."/>
            <person name="Kingsbury R."/>
            <person name="Harsha H.C."/>
            <person name="Nair B."/>
            <person name="Prasad T.S."/>
            <person name="Chauhan D.S."/>
            <person name="Katoch K."/>
            <person name="Katoch V.M."/>
            <person name="Kumar P."/>
            <person name="Chaerkady R."/>
            <person name="Ramachandran S."/>
            <person name="Dash D."/>
            <person name="Pandey A."/>
        </authorList>
    </citation>
    <scope>IDENTIFICATION BY MASS SPECTROMETRY [LARGE SCALE ANALYSIS]</scope>
    <source>
        <strain>ATCC 25618 / H37Rv</strain>
    </source>
</reference>
<protein>
    <recommendedName>
        <fullName>tRNA threonylcarbamoyladenosine biosynthesis protein TsaE</fullName>
    </recommendedName>
    <alternativeName>
        <fullName>t(6)A37 threonylcarbamoyladenosine biosynthesis protein TsaE</fullName>
    </alternativeName>
</protein>
<gene>
    <name type="primary">tsaE</name>
    <name type="ordered locus">Rv3422c</name>
    <name type="ORF">MTCY78.07</name>
</gene>
<name>TSAE_MYCTU</name>
<comment type="function">
    <text evidence="1">Required for the formation of a threonylcarbamoyl group on adenosine at position 37 (t(6)A37) in tRNAs that read codons beginning with adenine. Is involved in the transfer of the threonylcarbamoyl moiety of threonylcarbamoyl-AMP (TC-AMP) to the N6 group of A37, together with TsaD and TsaB. TsaE seems to play an indirect role in the t(6)A biosynthesis pathway, possibly in regulating the core enzymatic function of TsaD (By similarity).</text>
</comment>
<comment type="subcellular location">
    <subcellularLocation>
        <location evidence="1">Cytoplasm</location>
    </subcellularLocation>
</comment>
<comment type="similarity">
    <text evidence="3">Belongs to the TsaE family.</text>
</comment>
<sequence>MSREGIRRRPKARAGLTGGGTATLPRVEDTLTLGSRLGEQLCAGDVVVLSGPLGAGKTVLAKGIAMAMDVEGPITSPTFVLARMHRPRRPGTPAMVHVDVYRLLDHNSADLLSELDSLDLDTDLEDAVVVVEWGEGLAERLSQRHLDVRLERVSHSDTRIATWSWGRS</sequence>
<feature type="chain" id="PRO_0000096214" description="tRNA threonylcarbamoyladenosine biosynthesis protein TsaE">
    <location>
        <begin position="1"/>
        <end position="168"/>
    </location>
</feature>
<feature type="region of interest" description="Disordered" evidence="2">
    <location>
        <begin position="1"/>
        <end position="21"/>
    </location>
</feature>
<feature type="binding site" evidence="1">
    <location>
        <begin position="54"/>
        <end position="59"/>
    </location>
    <ligand>
        <name>ATP</name>
        <dbReference type="ChEBI" id="CHEBI:30616"/>
    </ligand>
</feature>
<feature type="binding site" evidence="1">
    <location>
        <position position="58"/>
    </location>
    <ligand>
        <name>Mg(2+)</name>
        <dbReference type="ChEBI" id="CHEBI:18420"/>
    </ligand>
</feature>
<feature type="binding site" evidence="1">
    <location>
        <position position="132"/>
    </location>
    <ligand>
        <name>Mg(2+)</name>
        <dbReference type="ChEBI" id="CHEBI:18420"/>
    </ligand>
</feature>